<keyword id="KW-0067">ATP-binding</keyword>
<keyword id="KW-0143">Chaperone</keyword>
<keyword id="KW-0547">Nucleotide-binding</keyword>
<protein>
    <recommendedName>
        <fullName evidence="1">Chaperone protein HscA homolog</fullName>
    </recommendedName>
</protein>
<name>HSCA_SHESA</name>
<proteinExistence type="inferred from homology"/>
<reference key="1">
    <citation type="submission" date="2006-09" db="EMBL/GenBank/DDBJ databases">
        <title>Complete sequence of chromosome 1 of Shewanella sp. ANA-3.</title>
        <authorList>
            <person name="Copeland A."/>
            <person name="Lucas S."/>
            <person name="Lapidus A."/>
            <person name="Barry K."/>
            <person name="Detter J.C."/>
            <person name="Glavina del Rio T."/>
            <person name="Hammon N."/>
            <person name="Israni S."/>
            <person name="Dalin E."/>
            <person name="Tice H."/>
            <person name="Pitluck S."/>
            <person name="Chertkov O."/>
            <person name="Brettin T."/>
            <person name="Bruce D."/>
            <person name="Han C."/>
            <person name="Tapia R."/>
            <person name="Gilna P."/>
            <person name="Schmutz J."/>
            <person name="Larimer F."/>
            <person name="Land M."/>
            <person name="Hauser L."/>
            <person name="Kyrpides N."/>
            <person name="Kim E."/>
            <person name="Newman D."/>
            <person name="Salticov C."/>
            <person name="Konstantinidis K."/>
            <person name="Klappenback J."/>
            <person name="Tiedje J."/>
            <person name="Richardson P."/>
        </authorList>
    </citation>
    <scope>NUCLEOTIDE SEQUENCE [LARGE SCALE GENOMIC DNA]</scope>
    <source>
        <strain>ANA-3</strain>
    </source>
</reference>
<sequence>MALLQIAEPGQSAAPHQHRLAVGIDLGTTNSLVAAVRSGVTATLPDENGQHSLPSIVRYTQDGIEVGQVAALSSAQDPKNTIVSVKRFMGRSLTDIQSGEQAFPYQFEASENGLPLFVTPQGQVNPVQVSAEILRPLVERAEKTLGGELQGVVITVPAYFDDAQRQGTKDAASLLGVKVLRLLNEPTAAAIAYGLDSKQEGVIAIYDLGGGTFDISILRLNRGVFEVLATGGDSALGGDDFDHLLQAHMQQVWQLANIDSQLSRQLLIEARRVKEALTDASEVEASLTLADGTVLKQLVTKAEFDCLISALVKKTIASCRRTLRDAGVTADEVLETVMVGGSTRVPLVREQVEAFFGKAPLTSIDPDRVVAIGAAIQADILVGNKPESELLLLDVIPLSLGIETMGGLVEKVVSRNTTIPVARAQEFTTFKDGQTAMAFHVVQGERELVDDCRSLARFTLKGIPPLAAGAAHIRVTFQVDADGLLSVTAMEKSTGVQSSIQVKPSFGLSDTEIATMLKDSMKHAKEDISRRMLAEQQVEAARVLESLNAALAKDGDLLTSDERQQIDAVMAQLAEIARGDDADAIKQAIEVLDEHTQDFAAKRMDNSIRVAFKGQSIDNI</sequence>
<evidence type="ECO:0000255" key="1">
    <source>
        <dbReference type="HAMAP-Rule" id="MF_00679"/>
    </source>
</evidence>
<gene>
    <name evidence="1" type="primary">hscA</name>
    <name type="ordered locus">Shewana3_2276</name>
</gene>
<feature type="chain" id="PRO_1000044891" description="Chaperone protein HscA homolog">
    <location>
        <begin position="1"/>
        <end position="620"/>
    </location>
</feature>
<comment type="function">
    <text evidence="1">Chaperone involved in the maturation of iron-sulfur cluster-containing proteins. Has a low intrinsic ATPase activity which is markedly stimulated by HscB.</text>
</comment>
<comment type="similarity">
    <text evidence="1">Belongs to the heat shock protein 70 family.</text>
</comment>
<organism>
    <name type="scientific">Shewanella sp. (strain ANA-3)</name>
    <dbReference type="NCBI Taxonomy" id="94122"/>
    <lineage>
        <taxon>Bacteria</taxon>
        <taxon>Pseudomonadati</taxon>
        <taxon>Pseudomonadota</taxon>
        <taxon>Gammaproteobacteria</taxon>
        <taxon>Alteromonadales</taxon>
        <taxon>Shewanellaceae</taxon>
        <taxon>Shewanella</taxon>
    </lineage>
</organism>
<dbReference type="EMBL" id="CP000469">
    <property type="protein sequence ID" value="ABK48505.1"/>
    <property type="molecule type" value="Genomic_DNA"/>
</dbReference>
<dbReference type="RefSeq" id="WP_011717219.1">
    <property type="nucleotide sequence ID" value="NC_008577.1"/>
</dbReference>
<dbReference type="SMR" id="A0KXI6"/>
<dbReference type="STRING" id="94122.Shewana3_2276"/>
<dbReference type="KEGG" id="shn:Shewana3_2276"/>
<dbReference type="eggNOG" id="COG0443">
    <property type="taxonomic scope" value="Bacteria"/>
</dbReference>
<dbReference type="HOGENOM" id="CLU_005965_2_1_6"/>
<dbReference type="OrthoDB" id="9766019at2"/>
<dbReference type="Proteomes" id="UP000002589">
    <property type="component" value="Chromosome"/>
</dbReference>
<dbReference type="GO" id="GO:0005524">
    <property type="term" value="F:ATP binding"/>
    <property type="evidence" value="ECO:0007669"/>
    <property type="project" value="UniProtKB-KW"/>
</dbReference>
<dbReference type="GO" id="GO:0016887">
    <property type="term" value="F:ATP hydrolysis activity"/>
    <property type="evidence" value="ECO:0007669"/>
    <property type="project" value="UniProtKB-UniRule"/>
</dbReference>
<dbReference type="GO" id="GO:0140662">
    <property type="term" value="F:ATP-dependent protein folding chaperone"/>
    <property type="evidence" value="ECO:0007669"/>
    <property type="project" value="InterPro"/>
</dbReference>
<dbReference type="GO" id="GO:0051082">
    <property type="term" value="F:unfolded protein binding"/>
    <property type="evidence" value="ECO:0007669"/>
    <property type="project" value="InterPro"/>
</dbReference>
<dbReference type="GO" id="GO:0016226">
    <property type="term" value="P:iron-sulfur cluster assembly"/>
    <property type="evidence" value="ECO:0007669"/>
    <property type="project" value="InterPro"/>
</dbReference>
<dbReference type="FunFam" id="3.30.420.40:FF:000046">
    <property type="entry name" value="Chaperone protein HscA"/>
    <property type="match status" value="1"/>
</dbReference>
<dbReference type="FunFam" id="2.60.34.10:FF:000005">
    <property type="entry name" value="Chaperone protein HscA homolog"/>
    <property type="match status" value="1"/>
</dbReference>
<dbReference type="Gene3D" id="1.20.1270.10">
    <property type="match status" value="1"/>
</dbReference>
<dbReference type="Gene3D" id="3.30.420.40">
    <property type="match status" value="2"/>
</dbReference>
<dbReference type="Gene3D" id="3.90.640.10">
    <property type="entry name" value="Actin, Chain A, domain 4"/>
    <property type="match status" value="1"/>
</dbReference>
<dbReference type="Gene3D" id="2.60.34.10">
    <property type="entry name" value="Substrate Binding Domain Of DNAk, Chain A, domain 1"/>
    <property type="match status" value="1"/>
</dbReference>
<dbReference type="HAMAP" id="MF_00679">
    <property type="entry name" value="HscA"/>
    <property type="match status" value="1"/>
</dbReference>
<dbReference type="InterPro" id="IPR043129">
    <property type="entry name" value="ATPase_NBD"/>
</dbReference>
<dbReference type="InterPro" id="IPR018181">
    <property type="entry name" value="Heat_shock_70_CS"/>
</dbReference>
<dbReference type="InterPro" id="IPR029048">
    <property type="entry name" value="HSP70_C_sf"/>
</dbReference>
<dbReference type="InterPro" id="IPR029047">
    <property type="entry name" value="HSP70_peptide-bd_sf"/>
</dbReference>
<dbReference type="InterPro" id="IPR013126">
    <property type="entry name" value="Hsp_70_fam"/>
</dbReference>
<dbReference type="InterPro" id="IPR010236">
    <property type="entry name" value="ISC_FeS_clus_asmbl_HscA"/>
</dbReference>
<dbReference type="NCBIfam" id="TIGR01991">
    <property type="entry name" value="HscA"/>
    <property type="match status" value="1"/>
</dbReference>
<dbReference type="NCBIfam" id="NF003520">
    <property type="entry name" value="PRK05183.1"/>
    <property type="match status" value="1"/>
</dbReference>
<dbReference type="PANTHER" id="PTHR19375">
    <property type="entry name" value="HEAT SHOCK PROTEIN 70KDA"/>
    <property type="match status" value="1"/>
</dbReference>
<dbReference type="Pfam" id="PF00012">
    <property type="entry name" value="HSP70"/>
    <property type="match status" value="1"/>
</dbReference>
<dbReference type="PRINTS" id="PR00301">
    <property type="entry name" value="HEATSHOCK70"/>
</dbReference>
<dbReference type="SUPFAM" id="SSF53067">
    <property type="entry name" value="Actin-like ATPase domain"/>
    <property type="match status" value="2"/>
</dbReference>
<dbReference type="SUPFAM" id="SSF100934">
    <property type="entry name" value="Heat shock protein 70kD (HSP70), C-terminal subdomain"/>
    <property type="match status" value="1"/>
</dbReference>
<dbReference type="SUPFAM" id="SSF100920">
    <property type="entry name" value="Heat shock protein 70kD (HSP70), peptide-binding domain"/>
    <property type="match status" value="1"/>
</dbReference>
<dbReference type="PROSITE" id="PS00297">
    <property type="entry name" value="HSP70_1"/>
    <property type="match status" value="1"/>
</dbReference>
<dbReference type="PROSITE" id="PS00329">
    <property type="entry name" value="HSP70_2"/>
    <property type="match status" value="1"/>
</dbReference>
<accession>A0KXI6</accession>